<comment type="function">
    <text evidence="1">Catalyzes the stereoinversion of LL-2,6-diaminopimelate (L,L-DAP) to meso-diaminopimelate (meso-DAP), a precursor of L-lysine and an essential component of the bacterial peptidoglycan.</text>
</comment>
<comment type="catalytic activity">
    <reaction evidence="1">
        <text>(2S,6S)-2,6-diaminopimelate = meso-2,6-diaminopimelate</text>
        <dbReference type="Rhea" id="RHEA:15393"/>
        <dbReference type="ChEBI" id="CHEBI:57609"/>
        <dbReference type="ChEBI" id="CHEBI:57791"/>
        <dbReference type="EC" id="5.1.1.7"/>
    </reaction>
</comment>
<comment type="pathway">
    <text evidence="1">Amino-acid biosynthesis; L-lysine biosynthesis via DAP pathway; DL-2,6-diaminopimelate from LL-2,6-diaminopimelate: step 1/1.</text>
</comment>
<comment type="subunit">
    <text evidence="1">Homodimer.</text>
</comment>
<comment type="subcellular location">
    <subcellularLocation>
        <location evidence="1">Cytoplasm</location>
    </subcellularLocation>
</comment>
<comment type="similarity">
    <text evidence="1">Belongs to the diaminopimelate epimerase family.</text>
</comment>
<protein>
    <recommendedName>
        <fullName evidence="1">Diaminopimelate epimerase</fullName>
        <shortName evidence="1">DAP epimerase</shortName>
        <ecNumber evidence="1">5.1.1.7</ecNumber>
    </recommendedName>
    <alternativeName>
        <fullName evidence="1">PLP-independent amino acid racemase</fullName>
    </alternativeName>
</protein>
<name>DAPF_HALOH</name>
<reference key="1">
    <citation type="journal article" date="2009" name="PLoS ONE">
        <title>Genome analysis of the anaerobic thermohalophilic bacterium Halothermothrix orenii.</title>
        <authorList>
            <person name="Mavromatis K."/>
            <person name="Ivanova N."/>
            <person name="Anderson I."/>
            <person name="Lykidis A."/>
            <person name="Hooper S.D."/>
            <person name="Sun H."/>
            <person name="Kunin V."/>
            <person name="Lapidus A."/>
            <person name="Hugenholtz P."/>
            <person name="Patel B."/>
            <person name="Kyrpides N.C."/>
        </authorList>
    </citation>
    <scope>NUCLEOTIDE SEQUENCE [LARGE SCALE GENOMIC DNA]</scope>
    <source>
        <strain>H 168 / OCM 544 / DSM 9562</strain>
    </source>
</reference>
<gene>
    <name evidence="1" type="primary">dapF</name>
    <name type="ordered locus">Hore_11570</name>
</gene>
<keyword id="KW-0028">Amino-acid biosynthesis</keyword>
<keyword id="KW-0963">Cytoplasm</keyword>
<keyword id="KW-0413">Isomerase</keyword>
<keyword id="KW-0457">Lysine biosynthesis</keyword>
<keyword id="KW-1185">Reference proteome</keyword>
<sequence length="284" mass="31682">MELSFTKMHGTGNDFIMVNGSNYPDLDFSKLARQLCRRHFSIGADGLIIVLPPESVEHDFRMRIFNADGSEAEMCGNGIRCFAHYLRENNLTTRDVLKIETLAGIITPEIVSYNGDKSLIKVNMGRPHFKSEEIPVNIEDELDYVKNFPLKIGNKKLNINCVSMGNPHTIIFVEDVNQIPVSTWGQEIEHNPLFPQKTNVEFIQIQSEDEIIMRVWERGSGITLACGTGACASVVAGIKNGLLKNMVTVHLPGGDLNIEWQEQDVFMTGPAESVYTGKIVIQEG</sequence>
<proteinExistence type="inferred from homology"/>
<feature type="chain" id="PRO_1000124417" description="Diaminopimelate epimerase">
    <location>
        <begin position="1"/>
        <end position="284"/>
    </location>
</feature>
<feature type="active site" description="Proton donor" evidence="1">
    <location>
        <position position="75"/>
    </location>
</feature>
<feature type="active site" description="Proton acceptor" evidence="1">
    <location>
        <position position="226"/>
    </location>
</feature>
<feature type="binding site" evidence="1">
    <location>
        <position position="13"/>
    </location>
    <ligand>
        <name>substrate</name>
    </ligand>
</feature>
<feature type="binding site" evidence="1">
    <location>
        <position position="66"/>
    </location>
    <ligand>
        <name>substrate</name>
    </ligand>
</feature>
<feature type="binding site" evidence="1">
    <location>
        <begin position="76"/>
        <end position="77"/>
    </location>
    <ligand>
        <name>substrate</name>
    </ligand>
</feature>
<feature type="binding site" evidence="1">
    <location>
        <position position="166"/>
    </location>
    <ligand>
        <name>substrate</name>
    </ligand>
</feature>
<feature type="binding site" evidence="1">
    <location>
        <position position="199"/>
    </location>
    <ligand>
        <name>substrate</name>
    </ligand>
</feature>
<feature type="binding site" evidence="1">
    <location>
        <begin position="217"/>
        <end position="218"/>
    </location>
    <ligand>
        <name>substrate</name>
    </ligand>
</feature>
<feature type="binding site" evidence="1">
    <location>
        <begin position="227"/>
        <end position="228"/>
    </location>
    <ligand>
        <name>substrate</name>
    </ligand>
</feature>
<feature type="site" description="Could be important to modulate the pK values of the two catalytic cysteine residues" evidence="1">
    <location>
        <position position="168"/>
    </location>
</feature>
<feature type="site" description="Could be important to modulate the pK values of the two catalytic cysteine residues" evidence="1">
    <location>
        <position position="217"/>
    </location>
</feature>
<dbReference type="EC" id="5.1.1.7" evidence="1"/>
<dbReference type="EMBL" id="CP001098">
    <property type="protein sequence ID" value="ACL69909.1"/>
    <property type="molecule type" value="Genomic_DNA"/>
</dbReference>
<dbReference type="RefSeq" id="WP_012636094.1">
    <property type="nucleotide sequence ID" value="NC_011899.1"/>
</dbReference>
<dbReference type="SMR" id="B8CX90"/>
<dbReference type="STRING" id="373903.Hore_11570"/>
<dbReference type="KEGG" id="hor:Hore_11570"/>
<dbReference type="eggNOG" id="COG0253">
    <property type="taxonomic scope" value="Bacteria"/>
</dbReference>
<dbReference type="HOGENOM" id="CLU_053306_3_0_9"/>
<dbReference type="OrthoDB" id="9805408at2"/>
<dbReference type="UniPathway" id="UPA00034">
    <property type="reaction ID" value="UER00025"/>
</dbReference>
<dbReference type="Proteomes" id="UP000000719">
    <property type="component" value="Chromosome"/>
</dbReference>
<dbReference type="GO" id="GO:0005829">
    <property type="term" value="C:cytosol"/>
    <property type="evidence" value="ECO:0007669"/>
    <property type="project" value="TreeGrafter"/>
</dbReference>
<dbReference type="GO" id="GO:0008837">
    <property type="term" value="F:diaminopimelate epimerase activity"/>
    <property type="evidence" value="ECO:0007669"/>
    <property type="project" value="UniProtKB-UniRule"/>
</dbReference>
<dbReference type="GO" id="GO:0009089">
    <property type="term" value="P:lysine biosynthetic process via diaminopimelate"/>
    <property type="evidence" value="ECO:0007669"/>
    <property type="project" value="UniProtKB-UniRule"/>
</dbReference>
<dbReference type="FunFam" id="3.10.310.10:FF:000001">
    <property type="entry name" value="Diaminopimelate epimerase"/>
    <property type="match status" value="1"/>
</dbReference>
<dbReference type="FunFam" id="3.10.310.10:FF:000004">
    <property type="entry name" value="Diaminopimelate epimerase"/>
    <property type="match status" value="1"/>
</dbReference>
<dbReference type="Gene3D" id="3.10.310.10">
    <property type="entry name" value="Diaminopimelate Epimerase, Chain A, domain 1"/>
    <property type="match status" value="2"/>
</dbReference>
<dbReference type="HAMAP" id="MF_00197">
    <property type="entry name" value="DAP_epimerase"/>
    <property type="match status" value="1"/>
</dbReference>
<dbReference type="InterPro" id="IPR018510">
    <property type="entry name" value="DAP_epimerase_AS"/>
</dbReference>
<dbReference type="InterPro" id="IPR001653">
    <property type="entry name" value="DAP_epimerase_DapF"/>
</dbReference>
<dbReference type="NCBIfam" id="TIGR00652">
    <property type="entry name" value="DapF"/>
    <property type="match status" value="1"/>
</dbReference>
<dbReference type="PANTHER" id="PTHR31689:SF0">
    <property type="entry name" value="DIAMINOPIMELATE EPIMERASE"/>
    <property type="match status" value="1"/>
</dbReference>
<dbReference type="PANTHER" id="PTHR31689">
    <property type="entry name" value="DIAMINOPIMELATE EPIMERASE, CHLOROPLASTIC"/>
    <property type="match status" value="1"/>
</dbReference>
<dbReference type="Pfam" id="PF01678">
    <property type="entry name" value="DAP_epimerase"/>
    <property type="match status" value="2"/>
</dbReference>
<dbReference type="SUPFAM" id="SSF54506">
    <property type="entry name" value="Diaminopimelate epimerase-like"/>
    <property type="match status" value="2"/>
</dbReference>
<dbReference type="PROSITE" id="PS01326">
    <property type="entry name" value="DAP_EPIMERASE"/>
    <property type="match status" value="1"/>
</dbReference>
<accession>B8CX90</accession>
<organism>
    <name type="scientific">Halothermothrix orenii (strain H 168 / OCM 544 / DSM 9562)</name>
    <dbReference type="NCBI Taxonomy" id="373903"/>
    <lineage>
        <taxon>Bacteria</taxon>
        <taxon>Bacillati</taxon>
        <taxon>Bacillota</taxon>
        <taxon>Clostridia</taxon>
        <taxon>Halanaerobiales</taxon>
        <taxon>Halothermotrichaceae</taxon>
        <taxon>Halothermothrix</taxon>
    </lineage>
</organism>
<evidence type="ECO:0000255" key="1">
    <source>
        <dbReference type="HAMAP-Rule" id="MF_00197"/>
    </source>
</evidence>